<evidence type="ECO:0000255" key="1">
    <source>
        <dbReference type="HAMAP-Rule" id="MF_00019"/>
    </source>
</evidence>
<reference key="1">
    <citation type="submission" date="2006-12" db="EMBL/GenBank/DDBJ databases">
        <title>Complete sequence of Halorhodospira halophila SL1.</title>
        <authorList>
            <consortium name="US DOE Joint Genome Institute"/>
            <person name="Copeland A."/>
            <person name="Lucas S."/>
            <person name="Lapidus A."/>
            <person name="Barry K."/>
            <person name="Detter J.C."/>
            <person name="Glavina del Rio T."/>
            <person name="Hammon N."/>
            <person name="Israni S."/>
            <person name="Dalin E."/>
            <person name="Tice H."/>
            <person name="Pitluck S."/>
            <person name="Saunders E."/>
            <person name="Brettin T."/>
            <person name="Bruce D."/>
            <person name="Han C."/>
            <person name="Tapia R."/>
            <person name="Schmutz J."/>
            <person name="Larimer F."/>
            <person name="Land M."/>
            <person name="Hauser L."/>
            <person name="Kyrpides N."/>
            <person name="Mikhailova N."/>
            <person name="Hoff W."/>
            <person name="Richardson P."/>
        </authorList>
    </citation>
    <scope>NUCLEOTIDE SEQUENCE [LARGE SCALE GENOMIC DNA]</scope>
    <source>
        <strain>DSM 244 / SL1</strain>
    </source>
</reference>
<protein>
    <recommendedName>
        <fullName evidence="1">Phosphate acyltransferase</fullName>
        <ecNumber evidence="1">2.3.1.274</ecNumber>
    </recommendedName>
    <alternativeName>
        <fullName evidence="1">Acyl-ACP phosphotransacylase</fullName>
    </alternativeName>
    <alternativeName>
        <fullName evidence="1">Acyl-[acyl-carrier-protein]--phosphate acyltransferase</fullName>
    </alternativeName>
    <alternativeName>
        <fullName evidence="1">Phosphate-acyl-ACP acyltransferase</fullName>
    </alternativeName>
</protein>
<organism>
    <name type="scientific">Halorhodospira halophila (strain DSM 244 / SL1)</name>
    <name type="common">Ectothiorhodospira halophila (strain DSM 244 / SL1)</name>
    <dbReference type="NCBI Taxonomy" id="349124"/>
    <lineage>
        <taxon>Bacteria</taxon>
        <taxon>Pseudomonadati</taxon>
        <taxon>Pseudomonadota</taxon>
        <taxon>Gammaproteobacteria</taxon>
        <taxon>Chromatiales</taxon>
        <taxon>Ectothiorhodospiraceae</taxon>
        <taxon>Halorhodospira</taxon>
    </lineage>
</organism>
<name>PLSX_HALHL</name>
<feature type="chain" id="PRO_0000329232" description="Phosphate acyltransferase">
    <location>
        <begin position="1"/>
        <end position="343"/>
    </location>
</feature>
<accession>A1WWE9</accession>
<keyword id="KW-0963">Cytoplasm</keyword>
<keyword id="KW-0444">Lipid biosynthesis</keyword>
<keyword id="KW-0443">Lipid metabolism</keyword>
<keyword id="KW-0594">Phospholipid biosynthesis</keyword>
<keyword id="KW-1208">Phospholipid metabolism</keyword>
<keyword id="KW-1185">Reference proteome</keyword>
<keyword id="KW-0808">Transferase</keyword>
<comment type="function">
    <text evidence="1">Catalyzes the reversible formation of acyl-phosphate (acyl-PO(4)) from acyl-[acyl-carrier-protein] (acyl-ACP). This enzyme utilizes acyl-ACP as fatty acyl donor, but not acyl-CoA.</text>
</comment>
<comment type="catalytic activity">
    <reaction evidence="1">
        <text>a fatty acyl-[ACP] + phosphate = an acyl phosphate + holo-[ACP]</text>
        <dbReference type="Rhea" id="RHEA:42292"/>
        <dbReference type="Rhea" id="RHEA-COMP:9685"/>
        <dbReference type="Rhea" id="RHEA-COMP:14125"/>
        <dbReference type="ChEBI" id="CHEBI:43474"/>
        <dbReference type="ChEBI" id="CHEBI:59918"/>
        <dbReference type="ChEBI" id="CHEBI:64479"/>
        <dbReference type="ChEBI" id="CHEBI:138651"/>
        <dbReference type="EC" id="2.3.1.274"/>
    </reaction>
</comment>
<comment type="pathway">
    <text evidence="1">Lipid metabolism; phospholipid metabolism.</text>
</comment>
<comment type="subunit">
    <text evidence="1">Homodimer. Probably interacts with PlsY.</text>
</comment>
<comment type="subcellular location">
    <subcellularLocation>
        <location evidence="1">Cytoplasm</location>
    </subcellularLocation>
    <text evidence="1">Associated with the membrane possibly through PlsY.</text>
</comment>
<comment type="similarity">
    <text evidence="1">Belongs to the PlsX family.</text>
</comment>
<dbReference type="EC" id="2.3.1.274" evidence="1"/>
<dbReference type="EMBL" id="CP000544">
    <property type="protein sequence ID" value="ABM62011.1"/>
    <property type="molecule type" value="Genomic_DNA"/>
</dbReference>
<dbReference type="RefSeq" id="WP_011814034.1">
    <property type="nucleotide sequence ID" value="NC_008789.1"/>
</dbReference>
<dbReference type="SMR" id="A1WWE9"/>
<dbReference type="STRING" id="349124.Hhal_1236"/>
<dbReference type="KEGG" id="hha:Hhal_1236"/>
<dbReference type="eggNOG" id="COG0416">
    <property type="taxonomic scope" value="Bacteria"/>
</dbReference>
<dbReference type="HOGENOM" id="CLU_039379_1_0_6"/>
<dbReference type="OrthoDB" id="9806408at2"/>
<dbReference type="UniPathway" id="UPA00085"/>
<dbReference type="Proteomes" id="UP000000647">
    <property type="component" value="Chromosome"/>
</dbReference>
<dbReference type="GO" id="GO:0005737">
    <property type="term" value="C:cytoplasm"/>
    <property type="evidence" value="ECO:0007669"/>
    <property type="project" value="UniProtKB-SubCell"/>
</dbReference>
<dbReference type="GO" id="GO:0043811">
    <property type="term" value="F:phosphate:acyl-[acyl carrier protein] acyltransferase activity"/>
    <property type="evidence" value="ECO:0007669"/>
    <property type="project" value="UniProtKB-UniRule"/>
</dbReference>
<dbReference type="GO" id="GO:0006633">
    <property type="term" value="P:fatty acid biosynthetic process"/>
    <property type="evidence" value="ECO:0007669"/>
    <property type="project" value="UniProtKB-UniRule"/>
</dbReference>
<dbReference type="GO" id="GO:0008654">
    <property type="term" value="P:phospholipid biosynthetic process"/>
    <property type="evidence" value="ECO:0007669"/>
    <property type="project" value="UniProtKB-KW"/>
</dbReference>
<dbReference type="Gene3D" id="3.40.718.10">
    <property type="entry name" value="Isopropylmalate Dehydrogenase"/>
    <property type="match status" value="1"/>
</dbReference>
<dbReference type="HAMAP" id="MF_00019">
    <property type="entry name" value="PlsX"/>
    <property type="match status" value="1"/>
</dbReference>
<dbReference type="InterPro" id="IPR003664">
    <property type="entry name" value="FA_synthesis"/>
</dbReference>
<dbReference type="InterPro" id="IPR012281">
    <property type="entry name" value="Phospholipid_synth_PlsX-like"/>
</dbReference>
<dbReference type="NCBIfam" id="TIGR00182">
    <property type="entry name" value="plsX"/>
    <property type="match status" value="1"/>
</dbReference>
<dbReference type="PANTHER" id="PTHR30100">
    <property type="entry name" value="FATTY ACID/PHOSPHOLIPID SYNTHESIS PROTEIN PLSX"/>
    <property type="match status" value="1"/>
</dbReference>
<dbReference type="PANTHER" id="PTHR30100:SF1">
    <property type="entry name" value="PHOSPHATE ACYLTRANSFERASE"/>
    <property type="match status" value="1"/>
</dbReference>
<dbReference type="Pfam" id="PF02504">
    <property type="entry name" value="FA_synthesis"/>
    <property type="match status" value="1"/>
</dbReference>
<dbReference type="PIRSF" id="PIRSF002465">
    <property type="entry name" value="Phsphlp_syn_PlsX"/>
    <property type="match status" value="1"/>
</dbReference>
<dbReference type="SUPFAM" id="SSF53659">
    <property type="entry name" value="Isocitrate/Isopropylmalate dehydrogenase-like"/>
    <property type="match status" value="1"/>
</dbReference>
<proteinExistence type="inferred from homology"/>
<sequence length="343" mass="36530">MTSQITLSLDAMGGDHGPSVVVPAALQALERHPHLHLVLVGQEETLREHLQAGNQGDSGRLSIRHCTQVVAMDEPPSHALRSKKDSSMRVALEMVKTGEADGSVSAGNTGALMATARYLLKTLPGIDRPAIMSTIPTLGGATHMLDLGANVDCTGEHLFQFGVMGAVAAEAVHGLERPRVGLLNIGEEEIKGNEQVKHAAELLLESEEIHYAGYIEGDGIYKGEADVVVCDGFVGNVALKTSEGVATLISEYMRMEFRRNLLSKIAGVVALPVLRALRRRIDPRQYNGASLLGLRGVALKSHGSADSFAFGRAIDTAVREAEQGVPDLINARIERLLGAKEGA</sequence>
<gene>
    <name evidence="1" type="primary">plsX</name>
    <name type="ordered locus">Hhal_1236</name>
</gene>